<accession>A2BV61</accession>
<keyword id="KW-0012">Acyltransferase</keyword>
<keyword id="KW-0963">Cytoplasm</keyword>
<keyword id="KW-0808">Transferase</keyword>
<feature type="chain" id="PRO_1000057108" description="Octanoyltransferase">
    <location>
        <begin position="1"/>
        <end position="214"/>
    </location>
</feature>
<feature type="domain" description="BPL/LPL catalytic" evidence="2">
    <location>
        <begin position="35"/>
        <end position="211"/>
    </location>
</feature>
<feature type="active site" description="Acyl-thioester intermediate" evidence="1">
    <location>
        <position position="173"/>
    </location>
</feature>
<feature type="binding site" evidence="1">
    <location>
        <begin position="75"/>
        <end position="82"/>
    </location>
    <ligand>
        <name>substrate</name>
    </ligand>
</feature>
<feature type="binding site" evidence="1">
    <location>
        <begin position="142"/>
        <end position="144"/>
    </location>
    <ligand>
        <name>substrate</name>
    </ligand>
</feature>
<feature type="binding site" evidence="1">
    <location>
        <begin position="155"/>
        <end position="157"/>
    </location>
    <ligand>
        <name>substrate</name>
    </ligand>
</feature>
<feature type="site" description="Lowers pKa of active site Cys" evidence="1">
    <location>
        <position position="139"/>
    </location>
</feature>
<protein>
    <recommendedName>
        <fullName evidence="1">Octanoyltransferase</fullName>
        <ecNumber evidence="1">2.3.1.181</ecNumber>
    </recommendedName>
    <alternativeName>
        <fullName evidence="1">Lipoate-protein ligase B</fullName>
    </alternativeName>
    <alternativeName>
        <fullName evidence="1">Lipoyl/octanoyl transferase</fullName>
    </alternativeName>
    <alternativeName>
        <fullName evidence="1">Octanoyl-[acyl-carrier-protein]-protein N-octanoyltransferase</fullName>
    </alternativeName>
</protein>
<gene>
    <name evidence="1" type="primary">lipB</name>
    <name type="ordered locus">P9515_04631</name>
</gene>
<organism>
    <name type="scientific">Prochlorococcus marinus (strain MIT 9515)</name>
    <dbReference type="NCBI Taxonomy" id="167542"/>
    <lineage>
        <taxon>Bacteria</taxon>
        <taxon>Bacillati</taxon>
        <taxon>Cyanobacteriota</taxon>
        <taxon>Cyanophyceae</taxon>
        <taxon>Synechococcales</taxon>
        <taxon>Prochlorococcaceae</taxon>
        <taxon>Prochlorococcus</taxon>
    </lineage>
</organism>
<name>LIPB_PROM5</name>
<sequence>MINRTSIIKQPDKISSFCDVYKLQKKYQDALISGKSNIDFIWLGEHQLCYTIGRGSNMGNLLFSLDEQDVFKIDRGGEVTCHMPGQLVTYLVLDLHNFNKDLNWYLRKIEKIIIKVLSSFNIDSSTKDGFTGVWTGERKIASIGIGCKRWVTIHGFSINVNCKLENFDKIVPCGIQGCQMANMSDYKKNLDIKEVKIIVKKIIQEEFYFNFISE</sequence>
<dbReference type="EC" id="2.3.1.181" evidence="1"/>
<dbReference type="EMBL" id="CP000552">
    <property type="protein sequence ID" value="ABM71672.1"/>
    <property type="molecule type" value="Genomic_DNA"/>
</dbReference>
<dbReference type="RefSeq" id="WP_011819780.1">
    <property type="nucleotide sequence ID" value="NC_008817.1"/>
</dbReference>
<dbReference type="SMR" id="A2BV61"/>
<dbReference type="STRING" id="167542.P9515_04631"/>
<dbReference type="GeneID" id="60200315"/>
<dbReference type="KEGG" id="pmc:P9515_04631"/>
<dbReference type="eggNOG" id="COG0321">
    <property type="taxonomic scope" value="Bacteria"/>
</dbReference>
<dbReference type="HOGENOM" id="CLU_035168_1_3_3"/>
<dbReference type="OrthoDB" id="9787061at2"/>
<dbReference type="UniPathway" id="UPA00538">
    <property type="reaction ID" value="UER00592"/>
</dbReference>
<dbReference type="Proteomes" id="UP000001589">
    <property type="component" value="Chromosome"/>
</dbReference>
<dbReference type="GO" id="GO:0005737">
    <property type="term" value="C:cytoplasm"/>
    <property type="evidence" value="ECO:0007669"/>
    <property type="project" value="UniProtKB-SubCell"/>
</dbReference>
<dbReference type="GO" id="GO:0033819">
    <property type="term" value="F:lipoyl(octanoyl) transferase activity"/>
    <property type="evidence" value="ECO:0007669"/>
    <property type="project" value="UniProtKB-EC"/>
</dbReference>
<dbReference type="GO" id="GO:0036211">
    <property type="term" value="P:protein modification process"/>
    <property type="evidence" value="ECO:0007669"/>
    <property type="project" value="InterPro"/>
</dbReference>
<dbReference type="CDD" id="cd16444">
    <property type="entry name" value="LipB"/>
    <property type="match status" value="1"/>
</dbReference>
<dbReference type="Gene3D" id="3.30.930.10">
    <property type="entry name" value="Bira Bifunctional Protein, Domain 2"/>
    <property type="match status" value="1"/>
</dbReference>
<dbReference type="HAMAP" id="MF_00013">
    <property type="entry name" value="LipB"/>
    <property type="match status" value="1"/>
</dbReference>
<dbReference type="InterPro" id="IPR045864">
    <property type="entry name" value="aa-tRNA-synth_II/BPL/LPL"/>
</dbReference>
<dbReference type="InterPro" id="IPR004143">
    <property type="entry name" value="BPL_LPL_catalytic"/>
</dbReference>
<dbReference type="InterPro" id="IPR000544">
    <property type="entry name" value="Octanoyltransferase"/>
</dbReference>
<dbReference type="InterPro" id="IPR020605">
    <property type="entry name" value="Octanoyltransferase_CS"/>
</dbReference>
<dbReference type="NCBIfam" id="TIGR00214">
    <property type="entry name" value="lipB"/>
    <property type="match status" value="1"/>
</dbReference>
<dbReference type="PANTHER" id="PTHR10993:SF7">
    <property type="entry name" value="LIPOYLTRANSFERASE 2, MITOCHONDRIAL-RELATED"/>
    <property type="match status" value="1"/>
</dbReference>
<dbReference type="PANTHER" id="PTHR10993">
    <property type="entry name" value="OCTANOYLTRANSFERASE"/>
    <property type="match status" value="1"/>
</dbReference>
<dbReference type="Pfam" id="PF21948">
    <property type="entry name" value="LplA-B_cat"/>
    <property type="match status" value="1"/>
</dbReference>
<dbReference type="PIRSF" id="PIRSF016262">
    <property type="entry name" value="LPLase"/>
    <property type="match status" value="1"/>
</dbReference>
<dbReference type="SUPFAM" id="SSF55681">
    <property type="entry name" value="Class II aaRS and biotin synthetases"/>
    <property type="match status" value="1"/>
</dbReference>
<dbReference type="PROSITE" id="PS51733">
    <property type="entry name" value="BPL_LPL_CATALYTIC"/>
    <property type="match status" value="1"/>
</dbReference>
<dbReference type="PROSITE" id="PS01313">
    <property type="entry name" value="LIPB"/>
    <property type="match status" value="1"/>
</dbReference>
<evidence type="ECO:0000255" key="1">
    <source>
        <dbReference type="HAMAP-Rule" id="MF_00013"/>
    </source>
</evidence>
<evidence type="ECO:0000255" key="2">
    <source>
        <dbReference type="PROSITE-ProRule" id="PRU01067"/>
    </source>
</evidence>
<comment type="function">
    <text evidence="1">Catalyzes the transfer of endogenously produced octanoic acid from octanoyl-acyl-carrier-protein onto the lipoyl domains of lipoate-dependent enzymes. Lipoyl-ACP can also act as a substrate although octanoyl-ACP is likely to be the physiological substrate.</text>
</comment>
<comment type="catalytic activity">
    <reaction evidence="1">
        <text>octanoyl-[ACP] + L-lysyl-[protein] = N(6)-octanoyl-L-lysyl-[protein] + holo-[ACP] + H(+)</text>
        <dbReference type="Rhea" id="RHEA:17665"/>
        <dbReference type="Rhea" id="RHEA-COMP:9636"/>
        <dbReference type="Rhea" id="RHEA-COMP:9685"/>
        <dbReference type="Rhea" id="RHEA-COMP:9752"/>
        <dbReference type="Rhea" id="RHEA-COMP:9928"/>
        <dbReference type="ChEBI" id="CHEBI:15378"/>
        <dbReference type="ChEBI" id="CHEBI:29969"/>
        <dbReference type="ChEBI" id="CHEBI:64479"/>
        <dbReference type="ChEBI" id="CHEBI:78463"/>
        <dbReference type="ChEBI" id="CHEBI:78809"/>
        <dbReference type="EC" id="2.3.1.181"/>
    </reaction>
</comment>
<comment type="pathway">
    <text evidence="1">Protein modification; protein lipoylation via endogenous pathway; protein N(6)-(lipoyl)lysine from octanoyl-[acyl-carrier-protein]: step 1/2.</text>
</comment>
<comment type="subcellular location">
    <subcellularLocation>
        <location evidence="1">Cytoplasm</location>
    </subcellularLocation>
</comment>
<comment type="miscellaneous">
    <text evidence="1">In the reaction, the free carboxyl group of octanoic acid is attached via an amide linkage to the epsilon-amino group of a specific lysine residue of lipoyl domains of lipoate-dependent enzymes.</text>
</comment>
<comment type="similarity">
    <text evidence="1">Belongs to the LipB family.</text>
</comment>
<proteinExistence type="inferred from homology"/>
<reference key="1">
    <citation type="journal article" date="2007" name="PLoS Genet.">
        <title>Patterns and implications of gene gain and loss in the evolution of Prochlorococcus.</title>
        <authorList>
            <person name="Kettler G.C."/>
            <person name="Martiny A.C."/>
            <person name="Huang K."/>
            <person name="Zucker J."/>
            <person name="Coleman M.L."/>
            <person name="Rodrigue S."/>
            <person name="Chen F."/>
            <person name="Lapidus A."/>
            <person name="Ferriera S."/>
            <person name="Johnson J."/>
            <person name="Steglich C."/>
            <person name="Church G.M."/>
            <person name="Richardson P."/>
            <person name="Chisholm S.W."/>
        </authorList>
    </citation>
    <scope>NUCLEOTIDE SEQUENCE [LARGE SCALE GENOMIC DNA]</scope>
    <source>
        <strain>MIT 9515</strain>
    </source>
</reference>